<feature type="chain" id="PRO_0000242928" description="tRNA uridine(34) hydroxylase">
    <location>
        <begin position="1"/>
        <end position="310"/>
    </location>
</feature>
<feature type="domain" description="Rhodanese" evidence="1">
    <location>
        <begin position="127"/>
        <end position="225"/>
    </location>
</feature>
<feature type="active site" description="Cysteine persulfide intermediate" evidence="1">
    <location>
        <position position="185"/>
    </location>
</feature>
<gene>
    <name evidence="1" type="primary">trhO</name>
    <name type="ordered locus">PMT9312_1105</name>
</gene>
<dbReference type="EC" id="1.14.-.-" evidence="1"/>
<dbReference type="EMBL" id="CP000111">
    <property type="protein sequence ID" value="ABB50164.1"/>
    <property type="molecule type" value="Genomic_DNA"/>
</dbReference>
<dbReference type="RefSeq" id="WP_011376655.1">
    <property type="nucleotide sequence ID" value="NC_007577.1"/>
</dbReference>
<dbReference type="SMR" id="Q31AD1"/>
<dbReference type="STRING" id="74546.PMT9312_1105"/>
<dbReference type="KEGG" id="pmi:PMT9312_1105"/>
<dbReference type="eggNOG" id="COG1054">
    <property type="taxonomic scope" value="Bacteria"/>
</dbReference>
<dbReference type="HOGENOM" id="CLU_038878_0_0_3"/>
<dbReference type="OrthoDB" id="9778326at2"/>
<dbReference type="Proteomes" id="UP000002715">
    <property type="component" value="Chromosome"/>
</dbReference>
<dbReference type="GO" id="GO:0016705">
    <property type="term" value="F:oxidoreductase activity, acting on paired donors, with incorporation or reduction of molecular oxygen"/>
    <property type="evidence" value="ECO:0007669"/>
    <property type="project" value="UniProtKB-UniRule"/>
</dbReference>
<dbReference type="GO" id="GO:0006400">
    <property type="term" value="P:tRNA modification"/>
    <property type="evidence" value="ECO:0007669"/>
    <property type="project" value="UniProtKB-UniRule"/>
</dbReference>
<dbReference type="CDD" id="cd01518">
    <property type="entry name" value="RHOD_YceA"/>
    <property type="match status" value="1"/>
</dbReference>
<dbReference type="Gene3D" id="3.30.70.100">
    <property type="match status" value="1"/>
</dbReference>
<dbReference type="Gene3D" id="3.40.250.10">
    <property type="entry name" value="Rhodanese-like domain"/>
    <property type="match status" value="1"/>
</dbReference>
<dbReference type="HAMAP" id="MF_00469">
    <property type="entry name" value="TrhO"/>
    <property type="match status" value="1"/>
</dbReference>
<dbReference type="InterPro" id="IPR001763">
    <property type="entry name" value="Rhodanese-like_dom"/>
</dbReference>
<dbReference type="InterPro" id="IPR036873">
    <property type="entry name" value="Rhodanese-like_dom_sf"/>
</dbReference>
<dbReference type="InterPro" id="IPR020936">
    <property type="entry name" value="TrhO"/>
</dbReference>
<dbReference type="InterPro" id="IPR040503">
    <property type="entry name" value="TRHO_N"/>
</dbReference>
<dbReference type="NCBIfam" id="NF001136">
    <property type="entry name" value="PRK00142.1-4"/>
    <property type="match status" value="1"/>
</dbReference>
<dbReference type="PANTHER" id="PTHR43268:SF3">
    <property type="entry name" value="RHODANESE-LIKE DOMAIN-CONTAINING PROTEIN 7-RELATED"/>
    <property type="match status" value="1"/>
</dbReference>
<dbReference type="PANTHER" id="PTHR43268">
    <property type="entry name" value="THIOSULFATE SULFURTRANSFERASE/RHODANESE-LIKE DOMAIN-CONTAINING PROTEIN 2"/>
    <property type="match status" value="1"/>
</dbReference>
<dbReference type="Pfam" id="PF00581">
    <property type="entry name" value="Rhodanese"/>
    <property type="match status" value="1"/>
</dbReference>
<dbReference type="Pfam" id="PF17773">
    <property type="entry name" value="UPF0176_N"/>
    <property type="match status" value="1"/>
</dbReference>
<dbReference type="SMART" id="SM00450">
    <property type="entry name" value="RHOD"/>
    <property type="match status" value="1"/>
</dbReference>
<dbReference type="SUPFAM" id="SSF52821">
    <property type="entry name" value="Rhodanese/Cell cycle control phosphatase"/>
    <property type="match status" value="1"/>
</dbReference>
<dbReference type="PROSITE" id="PS50206">
    <property type="entry name" value="RHODANESE_3"/>
    <property type="match status" value="1"/>
</dbReference>
<organism>
    <name type="scientific">Prochlorococcus marinus (strain MIT 9312)</name>
    <dbReference type="NCBI Taxonomy" id="74546"/>
    <lineage>
        <taxon>Bacteria</taxon>
        <taxon>Bacillati</taxon>
        <taxon>Cyanobacteriota</taxon>
        <taxon>Cyanophyceae</taxon>
        <taxon>Synechococcales</taxon>
        <taxon>Prochlorococcaceae</taxon>
        <taxon>Prochlorococcus</taxon>
    </lineage>
</organism>
<name>TRHO_PROM9</name>
<accession>Q31AD1</accession>
<reference key="1">
    <citation type="journal article" date="2006" name="Science">
        <title>Genomic islands and the ecology and evolution of Prochlorococcus.</title>
        <authorList>
            <person name="Coleman M.L."/>
            <person name="Sullivan M.B."/>
            <person name="Martiny A.C."/>
            <person name="Steglich C."/>
            <person name="Barry K."/>
            <person name="Delong E.F."/>
            <person name="Chisholm S.W."/>
        </authorList>
    </citation>
    <scope>NUCLEOTIDE SEQUENCE [LARGE SCALE GENOMIC DNA]</scope>
    <source>
        <strain>MIT 9312</strain>
    </source>
</reference>
<protein>
    <recommendedName>
        <fullName evidence="1">tRNA uridine(34) hydroxylase</fullName>
        <ecNumber evidence="1">1.14.-.-</ecNumber>
    </recommendedName>
    <alternativeName>
        <fullName evidence="1">tRNA hydroxylation protein O</fullName>
    </alternativeName>
</protein>
<evidence type="ECO:0000255" key="1">
    <source>
        <dbReference type="HAMAP-Rule" id="MF_00469"/>
    </source>
</evidence>
<keyword id="KW-0560">Oxidoreductase</keyword>
<keyword id="KW-0819">tRNA processing</keyword>
<proteinExistence type="inferred from homology"/>
<sequence length="310" mass="35918">MKGKNYKIVSLYSFFPFQENLIIDLKSKLLEIGYENDLSGLLIFASEGINGTICAEKNVIDIVINLLNKYADNRNLNIKVNFSKKKVFKKLKIKIKKEIVTMGVPEINPSENNGTYIDSANWNKLIKNQNTIVIDTRNHYEVSVGTFQNSINPNTRNFSEFPKWVDDQLDTHLENKESTNIAMFCTGGIRCEKATSLLKKKGYKNIYHLQGGILQYLDDIPKEKNLFEGECYVFDKRVALDQELEKGSYSICHACGMPVSIQDQERKEYRKGIQCHFCIDQFSDDDRKRFEERQKQIDRLKVGNHKIFKD</sequence>
<comment type="function">
    <text evidence="1">Catalyzes oxygen-dependent 5-hydroxyuridine (ho5U) modification at position 34 in tRNAs.</text>
</comment>
<comment type="catalytic activity">
    <reaction evidence="1">
        <text>uridine(34) in tRNA + AH2 + O2 = 5-hydroxyuridine(34) in tRNA + A + H2O</text>
        <dbReference type="Rhea" id="RHEA:64224"/>
        <dbReference type="Rhea" id="RHEA-COMP:11727"/>
        <dbReference type="Rhea" id="RHEA-COMP:13381"/>
        <dbReference type="ChEBI" id="CHEBI:13193"/>
        <dbReference type="ChEBI" id="CHEBI:15377"/>
        <dbReference type="ChEBI" id="CHEBI:15379"/>
        <dbReference type="ChEBI" id="CHEBI:17499"/>
        <dbReference type="ChEBI" id="CHEBI:65315"/>
        <dbReference type="ChEBI" id="CHEBI:136877"/>
    </reaction>
</comment>
<comment type="similarity">
    <text evidence="1">Belongs to the TrhO family.</text>
</comment>